<accession>Q09X04</accession>
<reference key="1">
    <citation type="submission" date="2005-09" db="EMBL/GenBank/DDBJ databases">
        <title>The chloroplast genome of mulberry: structural features and comparative analysis.</title>
        <authorList>
            <person name="Ravi V."/>
            <person name="Khurana J.P."/>
            <person name="Tyagi A.K."/>
            <person name="Khurana P."/>
        </authorList>
    </citation>
    <scope>NUCLEOTIDE SEQUENCE [LARGE SCALE GENOMIC DNA]</scope>
    <source>
        <strain>cv. K2</strain>
    </source>
</reference>
<sequence>MQMRNTFSWIKEEIIRFIAVSLIIYIITRAPISNAYPIFAQQSYENPREATGRIVCANCHLANKPVDIEVPQAVLPDTVFEAVVRIPYDLQLKQVLANGKKGALNVGAVLILPEGFELAPPDRISPEIKEKISNLSFQSYRPTKKNILVIGPVPGQKYSEITFPILSPDPATKKDVHFLKYPIYVGGNRGRGQIYPDGSKSNNNVYNATSAGIVSKIIRKEKGGYEITIVDASDGRQVVDIIPPGPELLVSEGESIKLDQPLTSNPNVGGFGQGDAEIVLQDPLRVQGLLLFLASIILAQIFLVLKKKQFEKVQLSEMNF</sequence>
<proteinExistence type="inferred from homology"/>
<organism>
    <name type="scientific">Morus indica</name>
    <name type="common">Mulberry</name>
    <dbReference type="NCBI Taxonomy" id="248361"/>
    <lineage>
        <taxon>Eukaryota</taxon>
        <taxon>Viridiplantae</taxon>
        <taxon>Streptophyta</taxon>
        <taxon>Embryophyta</taxon>
        <taxon>Tracheophyta</taxon>
        <taxon>Spermatophyta</taxon>
        <taxon>Magnoliopsida</taxon>
        <taxon>eudicotyledons</taxon>
        <taxon>Gunneridae</taxon>
        <taxon>Pentapetalae</taxon>
        <taxon>rosids</taxon>
        <taxon>fabids</taxon>
        <taxon>Rosales</taxon>
        <taxon>Moraceae</taxon>
        <taxon>Moreae</taxon>
        <taxon>Morus</taxon>
    </lineage>
</organism>
<comment type="function">
    <text evidence="2">Component of the cytochrome b6-f complex, which mediates electron transfer between photosystem II (PSII) and photosystem I (PSI), cyclic electron flow around PSI, and state transitions.</text>
</comment>
<comment type="cofactor">
    <cofactor evidence="2">
        <name>heme</name>
        <dbReference type="ChEBI" id="CHEBI:30413"/>
    </cofactor>
    <text evidence="2">Binds 1 heme group covalently.</text>
</comment>
<comment type="subunit">
    <text evidence="1">The 4 large subunits of the cytochrome b6-f complex are cytochrome b6, subunit IV (17 kDa polypeptide, petD), cytochrome f and the Rieske protein, while the 4 small subunits are PetG, PetL, PetM and PetN. The complex functions as a dimer (By similarity).</text>
</comment>
<comment type="subcellular location">
    <subcellularLocation>
        <location evidence="2">Plastid</location>
        <location evidence="2">Chloroplast thylakoid membrane</location>
        <topology evidence="2">Single-pass membrane protein</topology>
    </subcellularLocation>
</comment>
<comment type="similarity">
    <text evidence="2">Belongs to the cytochrome f family.</text>
</comment>
<evidence type="ECO:0000250" key="1"/>
<evidence type="ECO:0000255" key="2">
    <source>
        <dbReference type="HAMAP-Rule" id="MF_00610"/>
    </source>
</evidence>
<protein>
    <recommendedName>
        <fullName evidence="2">Cytochrome f</fullName>
    </recommendedName>
</protein>
<dbReference type="EMBL" id="DQ226511">
    <property type="protein sequence ID" value="ABB20969.1"/>
    <property type="molecule type" value="Genomic_DNA"/>
</dbReference>
<dbReference type="RefSeq" id="YP_762274.1">
    <property type="nucleotide sequence ID" value="NC_008359.1"/>
</dbReference>
<dbReference type="SMR" id="Q09X04"/>
<dbReference type="GeneID" id="4290677"/>
<dbReference type="GO" id="GO:0009535">
    <property type="term" value="C:chloroplast thylakoid membrane"/>
    <property type="evidence" value="ECO:0007669"/>
    <property type="project" value="UniProtKB-SubCell"/>
</dbReference>
<dbReference type="GO" id="GO:0009055">
    <property type="term" value="F:electron transfer activity"/>
    <property type="evidence" value="ECO:0007669"/>
    <property type="project" value="UniProtKB-UniRule"/>
</dbReference>
<dbReference type="GO" id="GO:0020037">
    <property type="term" value="F:heme binding"/>
    <property type="evidence" value="ECO:0007669"/>
    <property type="project" value="InterPro"/>
</dbReference>
<dbReference type="GO" id="GO:0005506">
    <property type="term" value="F:iron ion binding"/>
    <property type="evidence" value="ECO:0007669"/>
    <property type="project" value="InterPro"/>
</dbReference>
<dbReference type="GO" id="GO:0015979">
    <property type="term" value="P:photosynthesis"/>
    <property type="evidence" value="ECO:0007669"/>
    <property type="project" value="UniProtKB-UniRule"/>
</dbReference>
<dbReference type="FunFam" id="1.20.5.700:FF:000001">
    <property type="entry name" value="Cytochrome f"/>
    <property type="match status" value="1"/>
</dbReference>
<dbReference type="FunFam" id="2.40.50.100:FF:000007">
    <property type="entry name" value="Cytochrome f"/>
    <property type="match status" value="1"/>
</dbReference>
<dbReference type="FunFam" id="2.60.40.830:FF:000001">
    <property type="entry name" value="Cytochrome f"/>
    <property type="match status" value="1"/>
</dbReference>
<dbReference type="Gene3D" id="2.40.50.100">
    <property type="match status" value="1"/>
</dbReference>
<dbReference type="Gene3D" id="2.60.40.830">
    <property type="entry name" value="Cytochrome f large domain"/>
    <property type="match status" value="1"/>
</dbReference>
<dbReference type="Gene3D" id="1.20.5.700">
    <property type="entry name" value="Single helix bin"/>
    <property type="match status" value="1"/>
</dbReference>
<dbReference type="HAMAP" id="MF_00610">
    <property type="entry name" value="Cytb6_f_cytF"/>
    <property type="match status" value="1"/>
</dbReference>
<dbReference type="InterPro" id="IPR024058">
    <property type="entry name" value="Cyt-f_TM"/>
</dbReference>
<dbReference type="InterPro" id="IPR002325">
    <property type="entry name" value="Cyt_f"/>
</dbReference>
<dbReference type="InterPro" id="IPR024094">
    <property type="entry name" value="Cyt_f_lg_dom"/>
</dbReference>
<dbReference type="InterPro" id="IPR036826">
    <property type="entry name" value="Cyt_f_lg_dom_sf"/>
</dbReference>
<dbReference type="InterPro" id="IPR011054">
    <property type="entry name" value="Rudment_hybrid_motif"/>
</dbReference>
<dbReference type="PANTHER" id="PTHR33288">
    <property type="match status" value="1"/>
</dbReference>
<dbReference type="PANTHER" id="PTHR33288:SF10">
    <property type="entry name" value="CYTOCHROME F"/>
    <property type="match status" value="1"/>
</dbReference>
<dbReference type="Pfam" id="PF01333">
    <property type="entry name" value="Apocytochr_F_C"/>
    <property type="match status" value="1"/>
</dbReference>
<dbReference type="Pfam" id="PF16639">
    <property type="entry name" value="Apocytochr_F_N"/>
    <property type="match status" value="1"/>
</dbReference>
<dbReference type="PRINTS" id="PR00610">
    <property type="entry name" value="CYTOCHROMEF"/>
</dbReference>
<dbReference type="SUPFAM" id="SSF103431">
    <property type="entry name" value="Cytochrome f subunit of the cytochrome b6f complex, transmembrane anchor"/>
    <property type="match status" value="1"/>
</dbReference>
<dbReference type="SUPFAM" id="SSF49441">
    <property type="entry name" value="Cytochrome f, large domain"/>
    <property type="match status" value="1"/>
</dbReference>
<dbReference type="SUPFAM" id="SSF51246">
    <property type="entry name" value="Rudiment single hybrid motif"/>
    <property type="match status" value="1"/>
</dbReference>
<dbReference type="PROSITE" id="PS51010">
    <property type="entry name" value="CYTF"/>
    <property type="match status" value="1"/>
</dbReference>
<geneLocation type="chloroplast"/>
<feature type="signal peptide" evidence="2">
    <location>
        <begin position="1"/>
        <end position="35"/>
    </location>
</feature>
<feature type="chain" id="PRO_0000275427" description="Cytochrome f">
    <location>
        <begin position="36"/>
        <end position="320"/>
    </location>
</feature>
<feature type="transmembrane region" description="Helical" evidence="2">
    <location>
        <begin position="286"/>
        <end position="306"/>
    </location>
</feature>
<feature type="binding site" description="axial binding residue" evidence="2">
    <location>
        <position position="36"/>
    </location>
    <ligand>
        <name>heme</name>
        <dbReference type="ChEBI" id="CHEBI:30413"/>
    </ligand>
    <ligandPart>
        <name>Fe</name>
        <dbReference type="ChEBI" id="CHEBI:18248"/>
    </ligandPart>
</feature>
<feature type="binding site" description="covalent" evidence="2">
    <location>
        <position position="56"/>
    </location>
    <ligand>
        <name>heme</name>
        <dbReference type="ChEBI" id="CHEBI:30413"/>
    </ligand>
</feature>
<feature type="binding site" description="covalent" evidence="2">
    <location>
        <position position="59"/>
    </location>
    <ligand>
        <name>heme</name>
        <dbReference type="ChEBI" id="CHEBI:30413"/>
    </ligand>
</feature>
<feature type="binding site" description="axial binding residue" evidence="2">
    <location>
        <position position="60"/>
    </location>
    <ligand>
        <name>heme</name>
        <dbReference type="ChEBI" id="CHEBI:30413"/>
    </ligand>
    <ligandPart>
        <name>Fe</name>
        <dbReference type="ChEBI" id="CHEBI:18248"/>
    </ligandPart>
</feature>
<keyword id="KW-0150">Chloroplast</keyword>
<keyword id="KW-0249">Electron transport</keyword>
<keyword id="KW-0349">Heme</keyword>
<keyword id="KW-0408">Iron</keyword>
<keyword id="KW-0472">Membrane</keyword>
<keyword id="KW-0479">Metal-binding</keyword>
<keyword id="KW-0602">Photosynthesis</keyword>
<keyword id="KW-0934">Plastid</keyword>
<keyword id="KW-0732">Signal</keyword>
<keyword id="KW-0793">Thylakoid</keyword>
<keyword id="KW-0812">Transmembrane</keyword>
<keyword id="KW-1133">Transmembrane helix</keyword>
<keyword id="KW-0813">Transport</keyword>
<name>CYF_MORIN</name>
<gene>
    <name evidence="2" type="primary">petA</name>
    <name type="ordered locus">MoinCp034</name>
</gene>